<evidence type="ECO:0000250" key="1">
    <source>
        <dbReference type="UniProtKB" id="A0A3L6E0R4"/>
    </source>
</evidence>
<evidence type="ECO:0000250" key="2">
    <source>
        <dbReference type="UniProtKB" id="P05414"/>
    </source>
</evidence>
<evidence type="ECO:0000250" key="3">
    <source>
        <dbReference type="UniProtKB" id="Q10CE4"/>
    </source>
</evidence>
<evidence type="ECO:0000250" key="4">
    <source>
        <dbReference type="UniProtKB" id="Q9UJM8"/>
    </source>
</evidence>
<evidence type="ECO:0000255" key="5"/>
<evidence type="ECO:0000255" key="6">
    <source>
        <dbReference type="PROSITE-ProRule" id="PRU00683"/>
    </source>
</evidence>
<reference key="1">
    <citation type="journal article" date="2005" name="PLoS Biol.">
        <title>The genomes of Oryza sativa: a history of duplications.</title>
        <authorList>
            <person name="Yu J."/>
            <person name="Wang J."/>
            <person name="Lin W."/>
            <person name="Li S."/>
            <person name="Li H."/>
            <person name="Zhou J."/>
            <person name="Ni P."/>
            <person name="Dong W."/>
            <person name="Hu S."/>
            <person name="Zeng C."/>
            <person name="Zhang J."/>
            <person name="Zhang Y."/>
            <person name="Li R."/>
            <person name="Xu Z."/>
            <person name="Li S."/>
            <person name="Li X."/>
            <person name="Zheng H."/>
            <person name="Cong L."/>
            <person name="Lin L."/>
            <person name="Yin J."/>
            <person name="Geng J."/>
            <person name="Li G."/>
            <person name="Shi J."/>
            <person name="Liu J."/>
            <person name="Lv H."/>
            <person name="Li J."/>
            <person name="Wang J."/>
            <person name="Deng Y."/>
            <person name="Ran L."/>
            <person name="Shi X."/>
            <person name="Wang X."/>
            <person name="Wu Q."/>
            <person name="Li C."/>
            <person name="Ren X."/>
            <person name="Wang J."/>
            <person name="Wang X."/>
            <person name="Li D."/>
            <person name="Liu D."/>
            <person name="Zhang X."/>
            <person name="Ji Z."/>
            <person name="Zhao W."/>
            <person name="Sun Y."/>
            <person name="Zhang Z."/>
            <person name="Bao J."/>
            <person name="Han Y."/>
            <person name="Dong L."/>
            <person name="Ji J."/>
            <person name="Chen P."/>
            <person name="Wu S."/>
            <person name="Liu J."/>
            <person name="Xiao Y."/>
            <person name="Bu D."/>
            <person name="Tan J."/>
            <person name="Yang L."/>
            <person name="Ye C."/>
            <person name="Zhang J."/>
            <person name="Xu J."/>
            <person name="Zhou Y."/>
            <person name="Yu Y."/>
            <person name="Zhang B."/>
            <person name="Zhuang S."/>
            <person name="Wei H."/>
            <person name="Liu B."/>
            <person name="Lei M."/>
            <person name="Yu H."/>
            <person name="Li Y."/>
            <person name="Xu H."/>
            <person name="Wei S."/>
            <person name="He X."/>
            <person name="Fang L."/>
            <person name="Zhang Z."/>
            <person name="Zhang Y."/>
            <person name="Huang X."/>
            <person name="Su Z."/>
            <person name="Tong W."/>
            <person name="Li J."/>
            <person name="Tong Z."/>
            <person name="Li S."/>
            <person name="Ye J."/>
            <person name="Wang L."/>
            <person name="Fang L."/>
            <person name="Lei T."/>
            <person name="Chen C.-S."/>
            <person name="Chen H.-C."/>
            <person name="Xu Z."/>
            <person name="Li H."/>
            <person name="Huang H."/>
            <person name="Zhang F."/>
            <person name="Xu H."/>
            <person name="Li N."/>
            <person name="Zhao C."/>
            <person name="Li S."/>
            <person name="Dong L."/>
            <person name="Huang Y."/>
            <person name="Li L."/>
            <person name="Xi Y."/>
            <person name="Qi Q."/>
            <person name="Li W."/>
            <person name="Zhang B."/>
            <person name="Hu W."/>
            <person name="Zhang Y."/>
            <person name="Tian X."/>
            <person name="Jiao Y."/>
            <person name="Liang X."/>
            <person name="Jin J."/>
            <person name="Gao L."/>
            <person name="Zheng W."/>
            <person name="Hao B."/>
            <person name="Liu S.-M."/>
            <person name="Wang W."/>
            <person name="Yuan L."/>
            <person name="Cao M."/>
            <person name="McDermott J."/>
            <person name="Samudrala R."/>
            <person name="Wang J."/>
            <person name="Wong G.K.-S."/>
            <person name="Yang H."/>
        </authorList>
    </citation>
    <scope>NUCLEOTIDE SEQUENCE [LARGE SCALE GENOMIC DNA]</scope>
    <source>
        <strain>cv. 93-11</strain>
    </source>
</reference>
<protein>
    <recommendedName>
        <fullName>Glycolate oxidase 1</fullName>
        <shortName>GOX 1</shortName>
        <shortName>OsGLO1</shortName>
        <ecNumber evidence="3">1.1.3.15</ecNumber>
    </recommendedName>
    <alternativeName>
        <fullName>Peroxisomal (S)-2-hydroxy-acid oxidase GLO1</fullName>
    </alternativeName>
    <alternativeName>
        <fullName>Short chain alpha-hydroxy acid oxidase GLO1</fullName>
    </alternativeName>
</protein>
<feature type="chain" id="PRO_0000403410" description="Glycolate oxidase 1">
    <location>
        <begin position="1"/>
        <end position="369"/>
    </location>
</feature>
<feature type="domain" description="FMN hydroxy acid dehydrogenase" evidence="6">
    <location>
        <begin position="1"/>
        <end position="360"/>
    </location>
</feature>
<feature type="short sequence motif" description="Microbody targeting signal" evidence="5">
    <location>
        <begin position="367"/>
        <end position="369"/>
    </location>
</feature>
<feature type="active site" description="Proton acceptor" evidence="2">
    <location>
        <position position="255"/>
    </location>
</feature>
<feature type="binding site" evidence="4">
    <location>
        <position position="25"/>
    </location>
    <ligand>
        <name>glyoxylate</name>
        <dbReference type="ChEBI" id="CHEBI:36655"/>
    </ligand>
</feature>
<feature type="binding site" evidence="2">
    <location>
        <begin position="78"/>
        <end position="80"/>
    </location>
    <ligand>
        <name>FMN</name>
        <dbReference type="ChEBI" id="CHEBI:58210"/>
    </ligand>
</feature>
<feature type="binding site" evidence="2">
    <location>
        <position position="107"/>
    </location>
    <ligand>
        <name>FMN</name>
        <dbReference type="ChEBI" id="CHEBI:58210"/>
    </ligand>
</feature>
<feature type="binding site" evidence="2">
    <location>
        <begin position="128"/>
        <end position="130"/>
    </location>
    <ligand>
        <name>FMN</name>
        <dbReference type="ChEBI" id="CHEBI:58210"/>
    </ligand>
</feature>
<feature type="binding site" evidence="4">
    <location>
        <position position="130"/>
    </location>
    <ligand>
        <name>glyoxylate</name>
        <dbReference type="ChEBI" id="CHEBI:36655"/>
    </ligand>
</feature>
<feature type="binding site" evidence="2">
    <location>
        <position position="156"/>
    </location>
    <ligand>
        <name>FMN</name>
        <dbReference type="ChEBI" id="CHEBI:58210"/>
    </ligand>
</feature>
<feature type="binding site" evidence="4">
    <location>
        <position position="165"/>
    </location>
    <ligand>
        <name>glyoxylate</name>
        <dbReference type="ChEBI" id="CHEBI:36655"/>
    </ligand>
</feature>
<feature type="binding site" evidence="2">
    <location>
        <position position="231"/>
    </location>
    <ligand>
        <name>FMN</name>
        <dbReference type="ChEBI" id="CHEBI:58210"/>
    </ligand>
</feature>
<feature type="binding site" evidence="2">
    <location>
        <position position="253"/>
    </location>
    <ligand>
        <name>FMN</name>
        <dbReference type="ChEBI" id="CHEBI:58210"/>
    </ligand>
</feature>
<feature type="binding site" evidence="4">
    <location>
        <position position="255"/>
    </location>
    <ligand>
        <name>glyoxylate</name>
        <dbReference type="ChEBI" id="CHEBI:36655"/>
    </ligand>
</feature>
<feature type="binding site" evidence="4">
    <location>
        <position position="258"/>
    </location>
    <ligand>
        <name>glyoxylate</name>
        <dbReference type="ChEBI" id="CHEBI:36655"/>
    </ligand>
</feature>
<feature type="binding site" evidence="2">
    <location>
        <begin position="286"/>
        <end position="290"/>
    </location>
    <ligand>
        <name>FMN</name>
        <dbReference type="ChEBI" id="CHEBI:58210"/>
    </ligand>
</feature>
<feature type="binding site" evidence="2">
    <location>
        <begin position="309"/>
        <end position="310"/>
    </location>
    <ligand>
        <name>FMN</name>
        <dbReference type="ChEBI" id="CHEBI:58210"/>
    </ligand>
</feature>
<feature type="site" description="Involved in determining the substrate specificity of glycolate oxidase" evidence="2">
    <location>
        <position position="109"/>
    </location>
</feature>
<comment type="function">
    <text evidence="1 3">Catalyzes the oxidation of glycolate to glyoxylate, with a reduction of O2 to H2O2 (By similarity). Is a key enzyme in photorespiration in plants (By similarity). Can exert a strong regulation over photosynthesis, possibly through a feed-back inhibition on Rubisco activase. Does not seem to play a role in oxalate accumulation (By similarity).</text>
</comment>
<comment type="catalytic activity">
    <reaction evidence="3">
        <text>glycolate + O2 = glyoxylate + H2O2</text>
        <dbReference type="Rhea" id="RHEA:25311"/>
        <dbReference type="ChEBI" id="CHEBI:15379"/>
        <dbReference type="ChEBI" id="CHEBI:16240"/>
        <dbReference type="ChEBI" id="CHEBI:29805"/>
        <dbReference type="ChEBI" id="CHEBI:36655"/>
        <dbReference type="EC" id="1.1.3.15"/>
    </reaction>
    <physiologicalReaction direction="left-to-right" evidence="3">
        <dbReference type="Rhea" id="RHEA:25312"/>
    </physiologicalReaction>
</comment>
<comment type="cofactor">
    <cofactor evidence="2">
        <name>FMN</name>
        <dbReference type="ChEBI" id="CHEBI:58210"/>
    </cofactor>
</comment>
<comment type="pathway">
    <text evidence="1">Photosynthesis; photorespiration; glycine from 2-phosphoglycolate: step 2/3.</text>
</comment>
<comment type="subunit">
    <text evidence="2 3">Homotetramer (By similarity). Interacts with rice dwarf virus (RDV) P8. This interaction promotes viral P8 relocation to virus factories peripheral to peroxisomes (By similarity).</text>
</comment>
<comment type="subcellular location">
    <subcellularLocation>
        <location evidence="3">Peroxisome</location>
    </subcellularLocation>
</comment>
<comment type="similarity">
    <text evidence="6">Belongs to the FMN-dependent alpha-hydroxy acid dehydrogenase family.</text>
</comment>
<proteinExistence type="inferred from homology"/>
<accession>B8AKX6</accession>
<keyword id="KW-0285">Flavoprotein</keyword>
<keyword id="KW-0288">FMN</keyword>
<keyword id="KW-0323">Glycolate pathway</keyword>
<keyword id="KW-0945">Host-virus interaction</keyword>
<keyword id="KW-0560">Oxidoreductase</keyword>
<keyword id="KW-0576">Peroxisome</keyword>
<keyword id="KW-0601">Photorespiration</keyword>
<keyword id="KW-1185">Reference proteome</keyword>
<sequence>MGEITNVMEYQAIAKQKLPKMIYDYYASGAEDEWTLKENREAFSRILFRPRILIDVSKIDMSATVLGFKISMPIMIAPSAMQKMAHPDGEYATARAASAAGTIMTLSSWATSSVEEVASTGPGIRFFQLYVYKDRNVVEQLVRRAERAGFKAIALTVDTPRLGRREADIKNRFVLPPYLTLKNFEGLDLAEMDKSNDSGLASYVAGQIDRTLSWKDVKWLQSITSLPILVKGVITAEDARLAVHSGAAGIIVSNHGARQLDYVPATISALEEVVTAAAGRIPVYLDGGVRRGTDVFKALALGAAGVFIGRPVVFALAAEGEAGVRNVLRMMREEFELTMALSGCTSLADITRAHIYTDADRLARPFPRL</sequence>
<gene>
    <name type="primary">GLO1</name>
    <name type="ORF">OsI_13800</name>
</gene>
<dbReference type="EC" id="1.1.3.15" evidence="3"/>
<dbReference type="EMBL" id="CM000128">
    <property type="protein sequence ID" value="EEC76290.1"/>
    <property type="molecule type" value="Genomic_DNA"/>
</dbReference>
<dbReference type="SMR" id="B8AKX6"/>
<dbReference type="STRING" id="39946.B8AKX6"/>
<dbReference type="EnsemblPlants" id="BGIOSGA013686-TA">
    <property type="protein sequence ID" value="BGIOSGA013686-PA"/>
    <property type="gene ID" value="BGIOSGA013686"/>
</dbReference>
<dbReference type="EnsemblPlants" id="OsGoSa_03g0036820.01">
    <property type="protein sequence ID" value="OsGoSa_03g0036820.01"/>
    <property type="gene ID" value="OsGoSa_03g0036820"/>
</dbReference>
<dbReference type="EnsemblPlants" id="OsIR64_03g0036680.02">
    <property type="protein sequence ID" value="OsIR64_03g0036680.02"/>
    <property type="gene ID" value="OsIR64_03g0036680"/>
</dbReference>
<dbReference type="EnsemblPlants" id="OsKYG_03g0037180.01">
    <property type="protein sequence ID" value="OsKYG_03g0037180.01"/>
    <property type="gene ID" value="OsKYG_03g0037180"/>
</dbReference>
<dbReference type="EnsemblPlants" id="OsLaMu_03g0036870.01">
    <property type="protein sequence ID" value="OsLaMu_03g0036870.01"/>
    <property type="gene ID" value="OsLaMu_03g0036870"/>
</dbReference>
<dbReference type="EnsemblPlants" id="OsLima_03g0037170.01">
    <property type="protein sequence ID" value="OsLima_03g0037170.01"/>
    <property type="gene ID" value="OsLima_03g0037170"/>
</dbReference>
<dbReference type="EnsemblPlants" id="OsLiXu_03g0036910.01">
    <property type="protein sequence ID" value="OsLiXu_03g0036910.01"/>
    <property type="gene ID" value="OsLiXu_03g0036910"/>
</dbReference>
<dbReference type="EnsemblPlants" id="OsLiXu_Ung0014770.01">
    <property type="protein sequence ID" value="OsLiXu_Ung0014770.01"/>
    <property type="gene ID" value="OsLiXu_Ung0014770"/>
</dbReference>
<dbReference type="EnsemblPlants" id="OsMH63_03G036940_02">
    <property type="protein sequence ID" value="OsMH63_03G036940_02"/>
    <property type="gene ID" value="OsMH63_03G036940"/>
</dbReference>
<dbReference type="EnsemblPlants" id="OsPr106_03g0036880.01">
    <property type="protein sequence ID" value="OsPr106_03g0036880.01"/>
    <property type="gene ID" value="OsPr106_03g0036880"/>
</dbReference>
<dbReference type="EnsemblPlants" id="OsPr106_03g0036880.02">
    <property type="protein sequence ID" value="OsPr106_03g0036880.02"/>
    <property type="gene ID" value="OsPr106_03g0036880"/>
</dbReference>
<dbReference type="EnsemblPlants" id="OsZS97_03G036830_01">
    <property type="protein sequence ID" value="OsZS97_03G036830_01"/>
    <property type="gene ID" value="OsZS97_03G036830"/>
</dbReference>
<dbReference type="Gramene" id="BGIOSGA013686-TA">
    <property type="protein sequence ID" value="BGIOSGA013686-PA"/>
    <property type="gene ID" value="BGIOSGA013686"/>
</dbReference>
<dbReference type="Gramene" id="OsGoSa_03g0036820.01">
    <property type="protein sequence ID" value="OsGoSa_03g0036820.01"/>
    <property type="gene ID" value="OsGoSa_03g0036820"/>
</dbReference>
<dbReference type="Gramene" id="OsIR64_03g0036680.02">
    <property type="protein sequence ID" value="OsIR64_03g0036680.02"/>
    <property type="gene ID" value="OsIR64_03g0036680"/>
</dbReference>
<dbReference type="Gramene" id="OsKYG_03g0037180.01">
    <property type="protein sequence ID" value="OsKYG_03g0037180.01"/>
    <property type="gene ID" value="OsKYG_03g0037180"/>
</dbReference>
<dbReference type="Gramene" id="OsLaMu_03g0036870.01">
    <property type="protein sequence ID" value="OsLaMu_03g0036870.01"/>
    <property type="gene ID" value="OsLaMu_03g0036870"/>
</dbReference>
<dbReference type="Gramene" id="OsLima_03g0037170.01">
    <property type="protein sequence ID" value="OsLima_03g0037170.01"/>
    <property type="gene ID" value="OsLima_03g0037170"/>
</dbReference>
<dbReference type="Gramene" id="OsLiXu_03g0036910.01">
    <property type="protein sequence ID" value="OsLiXu_03g0036910.01"/>
    <property type="gene ID" value="OsLiXu_03g0036910"/>
</dbReference>
<dbReference type="Gramene" id="OsLiXu_Ung0014770.01">
    <property type="protein sequence ID" value="OsLiXu_Ung0014770.01"/>
    <property type="gene ID" value="OsLiXu_Ung0014770"/>
</dbReference>
<dbReference type="Gramene" id="OsMH63_03G036940_02">
    <property type="protein sequence ID" value="OsMH63_03G036940_02"/>
    <property type="gene ID" value="OsMH63_03G036940"/>
</dbReference>
<dbReference type="Gramene" id="OsPr106_03g0036880.01">
    <property type="protein sequence ID" value="OsPr106_03g0036880.01"/>
    <property type="gene ID" value="OsPr106_03g0036880"/>
</dbReference>
<dbReference type="Gramene" id="OsPr106_03g0036880.02">
    <property type="protein sequence ID" value="OsPr106_03g0036880.02"/>
    <property type="gene ID" value="OsPr106_03g0036880"/>
</dbReference>
<dbReference type="Gramene" id="OsZS97_03G036830_01">
    <property type="protein sequence ID" value="OsZS97_03G036830_01"/>
    <property type="gene ID" value="OsZS97_03G036830"/>
</dbReference>
<dbReference type="HOGENOM" id="CLU_020639_0_0_1"/>
<dbReference type="OMA" id="CMLADTD"/>
<dbReference type="OrthoDB" id="25826at2759"/>
<dbReference type="UniPathway" id="UPA00951">
    <property type="reaction ID" value="UER00912"/>
</dbReference>
<dbReference type="Proteomes" id="UP000007015">
    <property type="component" value="Chromosome 3"/>
</dbReference>
<dbReference type="GO" id="GO:0005777">
    <property type="term" value="C:peroxisome"/>
    <property type="evidence" value="ECO:0000250"/>
    <property type="project" value="UniProtKB"/>
</dbReference>
<dbReference type="GO" id="GO:0003973">
    <property type="term" value="F:(S)-2-hydroxy-acid oxidase activity"/>
    <property type="evidence" value="ECO:0000250"/>
    <property type="project" value="UniProtKB"/>
</dbReference>
<dbReference type="GO" id="GO:0010181">
    <property type="term" value="F:FMN binding"/>
    <property type="evidence" value="ECO:0007669"/>
    <property type="project" value="InterPro"/>
</dbReference>
<dbReference type="GO" id="GO:0009854">
    <property type="term" value="P:oxidative photosynthetic carbon pathway"/>
    <property type="evidence" value="ECO:0007669"/>
    <property type="project" value="UniProtKB-KW"/>
</dbReference>
<dbReference type="GO" id="GO:0009853">
    <property type="term" value="P:photorespiration"/>
    <property type="evidence" value="ECO:0000250"/>
    <property type="project" value="UniProtKB"/>
</dbReference>
<dbReference type="GO" id="GO:0010109">
    <property type="term" value="P:regulation of photosynthesis"/>
    <property type="evidence" value="ECO:0000250"/>
    <property type="project" value="UniProtKB"/>
</dbReference>
<dbReference type="GO" id="GO:0051707">
    <property type="term" value="P:response to other organism"/>
    <property type="evidence" value="ECO:0007669"/>
    <property type="project" value="UniProtKB-ARBA"/>
</dbReference>
<dbReference type="GO" id="GO:0046718">
    <property type="term" value="P:symbiont entry into host cell"/>
    <property type="evidence" value="ECO:0000250"/>
    <property type="project" value="UniProtKB"/>
</dbReference>
<dbReference type="CDD" id="cd02809">
    <property type="entry name" value="alpha_hydroxyacid_oxid_FMN"/>
    <property type="match status" value="1"/>
</dbReference>
<dbReference type="FunFam" id="3.20.20.70:FF:000063">
    <property type="entry name" value="peroxisomal (S)-2-hydroxy-acid oxidase GLO1"/>
    <property type="match status" value="1"/>
</dbReference>
<dbReference type="Gene3D" id="3.20.20.70">
    <property type="entry name" value="Aldolase class I"/>
    <property type="match status" value="1"/>
</dbReference>
<dbReference type="InterPro" id="IPR013785">
    <property type="entry name" value="Aldolase_TIM"/>
</dbReference>
<dbReference type="InterPro" id="IPR012133">
    <property type="entry name" value="Alpha-hydoxy_acid_DH_FMN"/>
</dbReference>
<dbReference type="InterPro" id="IPR000262">
    <property type="entry name" value="FMN-dep_DH"/>
</dbReference>
<dbReference type="InterPro" id="IPR037396">
    <property type="entry name" value="FMN_HAD"/>
</dbReference>
<dbReference type="InterPro" id="IPR008259">
    <property type="entry name" value="FMN_hydac_DH_AS"/>
</dbReference>
<dbReference type="PANTHER" id="PTHR10578:SF115">
    <property type="entry name" value="GLYCOLATE OXIDASE 1"/>
    <property type="match status" value="1"/>
</dbReference>
<dbReference type="PANTHER" id="PTHR10578">
    <property type="entry name" value="S -2-HYDROXY-ACID OXIDASE-RELATED"/>
    <property type="match status" value="1"/>
</dbReference>
<dbReference type="Pfam" id="PF01070">
    <property type="entry name" value="FMN_dh"/>
    <property type="match status" value="1"/>
</dbReference>
<dbReference type="PIRSF" id="PIRSF000138">
    <property type="entry name" value="Al-hdrx_acd_dh"/>
    <property type="match status" value="1"/>
</dbReference>
<dbReference type="SMART" id="SM01240">
    <property type="entry name" value="IMPDH"/>
    <property type="match status" value="1"/>
</dbReference>
<dbReference type="SUPFAM" id="SSF51395">
    <property type="entry name" value="FMN-linked oxidoreductases"/>
    <property type="match status" value="1"/>
</dbReference>
<dbReference type="PROSITE" id="PS00557">
    <property type="entry name" value="FMN_HYDROXY_ACID_DH_1"/>
    <property type="match status" value="1"/>
</dbReference>
<dbReference type="PROSITE" id="PS51349">
    <property type="entry name" value="FMN_HYDROXY_ACID_DH_2"/>
    <property type="match status" value="1"/>
</dbReference>
<name>GLO1_ORYSI</name>
<organism>
    <name type="scientific">Oryza sativa subsp. indica</name>
    <name type="common">Rice</name>
    <dbReference type="NCBI Taxonomy" id="39946"/>
    <lineage>
        <taxon>Eukaryota</taxon>
        <taxon>Viridiplantae</taxon>
        <taxon>Streptophyta</taxon>
        <taxon>Embryophyta</taxon>
        <taxon>Tracheophyta</taxon>
        <taxon>Spermatophyta</taxon>
        <taxon>Magnoliopsida</taxon>
        <taxon>Liliopsida</taxon>
        <taxon>Poales</taxon>
        <taxon>Poaceae</taxon>
        <taxon>BOP clade</taxon>
        <taxon>Oryzoideae</taxon>
        <taxon>Oryzeae</taxon>
        <taxon>Oryzinae</taxon>
        <taxon>Oryza</taxon>
        <taxon>Oryza sativa</taxon>
    </lineage>
</organism>